<reference key="1">
    <citation type="journal article" date="2012" name="Mol. Plant Microbe Interact.">
        <title>A Penicillium expansum glucose oxidase-encoding gene, GOX2, is essential for gluconic acid production and acidification during colonization of deciduous fruit.</title>
        <authorList>
            <person name="Barad S."/>
            <person name="Horowitz S.B."/>
            <person name="Moscovitz O."/>
            <person name="Lichter A."/>
            <person name="Sherman A."/>
            <person name="Prusky D."/>
        </authorList>
    </citation>
    <scope>NUCLEOTIDE SEQUENCE [GENOMIC DNA] OF 71-388</scope>
    <scope>FUNCTION</scope>
    <scope>INDUCTION</scope>
    <scope>CATALYTIC ACTIVITY</scope>
</reference>
<reference key="2">
    <citation type="journal article" date="2015" name="Mol. Plant Microbe Interact.">
        <title>Genome, transcriptome, and functional analyses of Penicillium expansum provide new insights into secondary metabolism and pathogenicity.</title>
        <authorList>
            <person name="Ballester A.R."/>
            <person name="Marcet-Houben M."/>
            <person name="Levin E."/>
            <person name="Sela N."/>
            <person name="Selma-Lazaro C."/>
            <person name="Carmona L."/>
            <person name="Wisniewski M."/>
            <person name="Droby S."/>
            <person name="Gonzalez-Candelas L."/>
            <person name="Gabaldon T."/>
        </authorList>
    </citation>
    <scope>NUCLEOTIDE SEQUENCE [LARGE SCALE GENOMIC DNA]</scope>
    <source>
        <strain>MD-8</strain>
    </source>
</reference>
<proteinExistence type="evidence at protein level"/>
<keyword id="KW-0134">Cell wall</keyword>
<keyword id="KW-0963">Cytoplasm</keyword>
<keyword id="KW-1015">Disulfide bond</keyword>
<keyword id="KW-0272">Extracellular matrix</keyword>
<keyword id="KW-0274">FAD</keyword>
<keyword id="KW-0285">Flavoprotein</keyword>
<keyword id="KW-0325">Glycoprotein</keyword>
<keyword id="KW-0560">Oxidoreductase</keyword>
<keyword id="KW-1185">Reference proteome</keyword>
<keyword id="KW-0964">Secreted</keyword>
<keyword id="KW-0732">Signal</keyword>
<gene>
    <name evidence="6" type="primary">gox1</name>
    <name type="ORF">PEX2_048230</name>
</gene>
<accession>A0A0A2JC26</accession>
<accession>Q6BCA4</accession>
<sequence>MKSIILSCFVISAAASQSYLPTEQIDVQSSLLSDPNHVAGKTVDYMIAGGGLTGLTIAAKLTENPNINVLVIENGFYESSEGEIIEDLNDYGDIFGTTVDHAYEIVSQAINNRTENIRSGNGLGGSTLTNGGSWTRPHKAQIDSWEKVFGNKDWNWDNLFPYMQKAEIARPPNDVEIAAGHFYNSSCHGTNGTVHAGPRNNGEPYSPIIETLMDSAKERGVPTQLDFHCGVPRGISMIPNALHEDQVRSDAAREWLLPNYKRPNLQVLTGQFVGKVLINQTATSGAIPGYKAVGVNFGTNKNVNSNVYAKHEVLLASGSAVSPRILEYSGIGLKSVLDAAGIQQIVDLPVGLNMQDQTTTTVGSRTKPSGNGQGQAIYFATFNETFGDYAPPAHELLNTKLHQWATETVARGGFHNVTALEIQYENYRDWLVNEEVAYTELFLDTSGKINFDLWDLIPFTRGSVHIQGNDPYLRRFSYDPKFFMNELDLLGQAAGSKLAREISNTGGMQTYFDGETTPGSNLAYNADLDQWVDYVKQNFRANWHAVGTCSMMAEELGGVVDSAARVYGVEGLRVVDGSIPPTQVSSHVMTVFYAMSLKISDAILADFHAKSSKH</sequence>
<feature type="signal peptide" evidence="2">
    <location>
        <begin position="1"/>
        <end position="15"/>
    </location>
</feature>
<feature type="chain" id="PRO_5013379941" description="Glucose oxidase 1">
    <location>
        <begin position="16"/>
        <end position="614"/>
    </location>
</feature>
<feature type="region of interest" description="Disordered" evidence="4">
    <location>
        <begin position="117"/>
        <end position="136"/>
    </location>
</feature>
<feature type="active site" description="Proton acceptor" evidence="1">
    <location>
        <position position="544"/>
    </location>
</feature>
<feature type="binding site" evidence="1">
    <location>
        <position position="52"/>
    </location>
    <ligand>
        <name>FAD</name>
        <dbReference type="ChEBI" id="CHEBI:57692"/>
    </ligand>
</feature>
<feature type="binding site" evidence="1">
    <location>
        <position position="53"/>
    </location>
    <ligand>
        <name>FAD</name>
        <dbReference type="ChEBI" id="CHEBI:57692"/>
    </ligand>
</feature>
<feature type="binding site" evidence="1">
    <location>
        <position position="73"/>
    </location>
    <ligand>
        <name>FAD</name>
        <dbReference type="ChEBI" id="CHEBI:57692"/>
    </ligand>
</feature>
<feature type="binding site" evidence="1">
    <location>
        <position position="126"/>
    </location>
    <ligand>
        <name>FAD</name>
        <dbReference type="ChEBI" id="CHEBI:57692"/>
    </ligand>
</feature>
<feature type="binding site" evidence="1">
    <location>
        <position position="130"/>
    </location>
    <ligand>
        <name>FAD</name>
        <dbReference type="ChEBI" id="CHEBI:57692"/>
    </ligand>
</feature>
<feature type="binding site" evidence="1">
    <location>
        <position position="131"/>
    </location>
    <ligand>
        <name>FAD</name>
        <dbReference type="ChEBI" id="CHEBI:57692"/>
    </ligand>
</feature>
<feature type="binding site" evidence="1">
    <location>
        <position position="133"/>
    </location>
    <ligand>
        <name>FAD</name>
        <dbReference type="ChEBI" id="CHEBI:57692"/>
    </ligand>
</feature>
<feature type="binding site" evidence="1">
    <location>
        <position position="273"/>
    </location>
    <ligand>
        <name>FAD</name>
        <dbReference type="ChEBI" id="CHEBI:57692"/>
    </ligand>
</feature>
<feature type="binding site" evidence="1">
    <location>
        <position position="565"/>
    </location>
    <ligand>
        <name>O2</name>
        <dbReference type="ChEBI" id="CHEBI:15379"/>
    </ligand>
</feature>
<feature type="binding site" evidence="1">
    <location>
        <position position="566"/>
    </location>
    <ligand>
        <name>O2</name>
        <dbReference type="ChEBI" id="CHEBI:15379"/>
    </ligand>
</feature>
<feature type="binding site" evidence="1">
    <location>
        <position position="577"/>
    </location>
    <ligand>
        <name>FAD</name>
        <dbReference type="ChEBI" id="CHEBI:57692"/>
    </ligand>
</feature>
<feature type="binding site" evidence="1">
    <location>
        <position position="589"/>
    </location>
    <ligand>
        <name>FAD</name>
        <dbReference type="ChEBI" id="CHEBI:57692"/>
    </ligand>
</feature>
<feature type="glycosylation site" description="N-linked (GlcNAc...) asparagine" evidence="3">
    <location>
        <position position="112"/>
    </location>
</feature>
<feature type="glycosylation site" description="N-linked (GlcNAc...) asparagine" evidence="3">
    <location>
        <position position="184"/>
    </location>
</feature>
<feature type="glycosylation site" description="N-linked (GlcNAc...) asparagine" evidence="3">
    <location>
        <position position="191"/>
    </location>
</feature>
<feature type="glycosylation site" description="N-linked (GlcNAc...) asparagine" evidence="3">
    <location>
        <position position="279"/>
    </location>
</feature>
<feature type="glycosylation site" description="N-linked (GlcNAc...) asparagine" evidence="3">
    <location>
        <position position="383"/>
    </location>
</feature>
<feature type="glycosylation site" description="N-linked (GlcNAc...) asparagine" evidence="3">
    <location>
        <position position="416"/>
    </location>
</feature>
<feature type="disulfide bond" evidence="1">
    <location>
        <begin position="187"/>
        <end position="229"/>
    </location>
</feature>
<feature type="sequence conflict" description="In Ref. 1; AAT76526." evidence="7" ref="1">
    <original>E</original>
    <variation>D</variation>
    <location>
        <position position="83"/>
    </location>
</feature>
<feature type="sequence conflict" description="In Ref. 1; AAT76526." evidence="7" ref="1">
    <original>T</original>
    <variation>I</variation>
    <location>
        <position position="129"/>
    </location>
</feature>
<feature type="sequence conflict" description="In Ref. 1; AAT76526." evidence="7" ref="1">
    <original>N</original>
    <variation>S</variation>
    <location>
        <position position="173"/>
    </location>
</feature>
<feature type="sequence conflict" description="In Ref. 1; AAT76526." evidence="7" ref="1">
    <original>Y</original>
    <variation>H</variation>
    <location>
        <position position="328"/>
    </location>
</feature>
<name>GOX1_PENEN</name>
<protein>
    <recommendedName>
        <fullName evidence="6">Glucose oxidase 1</fullName>
        <shortName evidence="6">GOX</shortName>
        <ecNumber evidence="5">1.1.3.4</ecNumber>
    </recommendedName>
    <alternativeName>
        <fullName evidence="7">Beta-D-glucose:oxygen 1-oxido-reductase 1</fullName>
    </alternativeName>
</protein>
<comment type="function">
    <text evidence="5">Glucose oxidase catalyzes the oxidation of beta-D-glucose to D-glucono-delta-lactone and hydrogen peroxide in the presence of molecular oxygen.</text>
</comment>
<comment type="catalytic activity">
    <reaction evidence="5">
        <text>beta-D-glucose + O2 = D-glucono-1,5-lactone + H2O2</text>
        <dbReference type="Rhea" id="RHEA:11428"/>
        <dbReference type="ChEBI" id="CHEBI:15379"/>
        <dbReference type="ChEBI" id="CHEBI:15903"/>
        <dbReference type="ChEBI" id="CHEBI:16217"/>
        <dbReference type="ChEBI" id="CHEBI:16240"/>
        <dbReference type="EC" id="1.1.3.4"/>
    </reaction>
    <physiologicalReaction direction="left-to-right" evidence="5">
        <dbReference type="Rhea" id="RHEA:11429"/>
    </physiologicalReaction>
</comment>
<comment type="cofactor">
    <cofactor evidence="1">
        <name>FAD</name>
        <dbReference type="ChEBI" id="CHEBI:57692"/>
    </cofactor>
</comment>
<comment type="subunit">
    <text evidence="1">Homodimer.</text>
</comment>
<comment type="subcellular location">
    <subcellularLocation>
        <location evidence="1">Secreted</location>
    </subcellularLocation>
    <subcellularLocation>
        <location evidence="1">Secreted</location>
        <location evidence="1">Cell wall</location>
    </subcellularLocation>
    <subcellularLocation>
        <location evidence="1">Cytoplasm</location>
    </subcellularLocation>
    <subcellularLocation>
        <location evidence="1">Secreted</location>
        <location evidence="1">Extracellular space</location>
        <location evidence="1">Extracellular matrix</location>
    </subcellularLocation>
</comment>
<comment type="induction">
    <text evidence="5">Expression is highest at pH 3.0 and decreases by 58, 59, and 90% at pH 5.0, 7.0, and 9.0, respectively.</text>
</comment>
<comment type="similarity">
    <text evidence="7">Belongs to the GMC oxidoreductase family.</text>
</comment>
<organism>
    <name type="scientific">Penicillium expansum</name>
    <name type="common">Blue mold rot fungus</name>
    <dbReference type="NCBI Taxonomy" id="27334"/>
    <lineage>
        <taxon>Eukaryota</taxon>
        <taxon>Fungi</taxon>
        <taxon>Dikarya</taxon>
        <taxon>Ascomycota</taxon>
        <taxon>Pezizomycotina</taxon>
        <taxon>Eurotiomycetes</taxon>
        <taxon>Eurotiomycetidae</taxon>
        <taxon>Eurotiales</taxon>
        <taxon>Aspergillaceae</taxon>
        <taxon>Penicillium</taxon>
    </lineage>
</organism>
<evidence type="ECO:0000250" key="1">
    <source>
        <dbReference type="UniProtKB" id="P13006"/>
    </source>
</evidence>
<evidence type="ECO:0000255" key="2"/>
<evidence type="ECO:0000255" key="3">
    <source>
        <dbReference type="PROSITE-ProRule" id="PRU00498"/>
    </source>
</evidence>
<evidence type="ECO:0000256" key="4">
    <source>
        <dbReference type="SAM" id="MobiDB-lite"/>
    </source>
</evidence>
<evidence type="ECO:0000269" key="5">
    <source>
    </source>
</evidence>
<evidence type="ECO:0000303" key="6">
    <source>
    </source>
</evidence>
<evidence type="ECO:0000305" key="7"/>
<dbReference type="EC" id="1.1.3.4" evidence="5"/>
<dbReference type="EMBL" id="AY669127">
    <property type="protein sequence ID" value="AAT76526.2"/>
    <property type="molecule type" value="Genomic_DNA"/>
</dbReference>
<dbReference type="EMBL" id="JQFZ01000258">
    <property type="protein sequence ID" value="KGO52924.1"/>
    <property type="molecule type" value="Genomic_DNA"/>
</dbReference>
<dbReference type="RefSeq" id="XP_016595620.1">
    <property type="nucleotide sequence ID" value="XM_016742098.1"/>
</dbReference>
<dbReference type="SMR" id="A0A0A2JC26"/>
<dbReference type="STRING" id="27334.A0A0A2JC26"/>
<dbReference type="GeneID" id="27677517"/>
<dbReference type="HOGENOM" id="CLU_002865_6_0_1"/>
<dbReference type="Proteomes" id="UP000030143">
    <property type="component" value="Unassembled WGS sequence"/>
</dbReference>
<dbReference type="GO" id="GO:0005737">
    <property type="term" value="C:cytoplasm"/>
    <property type="evidence" value="ECO:0007669"/>
    <property type="project" value="UniProtKB-SubCell"/>
</dbReference>
<dbReference type="GO" id="GO:0005576">
    <property type="term" value="C:extracellular region"/>
    <property type="evidence" value="ECO:0007669"/>
    <property type="project" value="UniProtKB-SubCell"/>
</dbReference>
<dbReference type="GO" id="GO:0050660">
    <property type="term" value="F:flavin adenine dinucleotide binding"/>
    <property type="evidence" value="ECO:0007669"/>
    <property type="project" value="InterPro"/>
</dbReference>
<dbReference type="GO" id="GO:0016614">
    <property type="term" value="F:oxidoreductase activity, acting on CH-OH group of donors"/>
    <property type="evidence" value="ECO:0007669"/>
    <property type="project" value="InterPro"/>
</dbReference>
<dbReference type="GO" id="GO:0044550">
    <property type="term" value="P:secondary metabolite biosynthetic process"/>
    <property type="evidence" value="ECO:0007669"/>
    <property type="project" value="UniProtKB-ARBA"/>
</dbReference>
<dbReference type="Gene3D" id="3.50.50.60">
    <property type="entry name" value="FAD/NAD(P)-binding domain"/>
    <property type="match status" value="1"/>
</dbReference>
<dbReference type="Gene3D" id="4.10.450.10">
    <property type="entry name" value="Glucose Oxidase, domain 2"/>
    <property type="match status" value="1"/>
</dbReference>
<dbReference type="Gene3D" id="3.30.560.10">
    <property type="entry name" value="Glucose Oxidase, domain 3"/>
    <property type="match status" value="1"/>
</dbReference>
<dbReference type="InterPro" id="IPR036188">
    <property type="entry name" value="FAD/NAD-bd_sf"/>
</dbReference>
<dbReference type="InterPro" id="IPR027424">
    <property type="entry name" value="Glucose_Oxidase_domain_2"/>
</dbReference>
<dbReference type="InterPro" id="IPR012132">
    <property type="entry name" value="GMC_OxRdtase"/>
</dbReference>
<dbReference type="InterPro" id="IPR000172">
    <property type="entry name" value="GMC_OxRdtase_N"/>
</dbReference>
<dbReference type="InterPro" id="IPR007867">
    <property type="entry name" value="GMC_OxRtase_C"/>
</dbReference>
<dbReference type="PANTHER" id="PTHR11552">
    <property type="entry name" value="GLUCOSE-METHANOL-CHOLINE GMC OXIDOREDUCTASE"/>
    <property type="match status" value="1"/>
</dbReference>
<dbReference type="PANTHER" id="PTHR11552:SF201">
    <property type="entry name" value="GLUCOSE-METHANOL-CHOLINE OXIDOREDUCTASE N-TERMINAL DOMAIN-CONTAINING PROTEIN"/>
    <property type="match status" value="1"/>
</dbReference>
<dbReference type="Pfam" id="PF05199">
    <property type="entry name" value="GMC_oxred_C"/>
    <property type="match status" value="1"/>
</dbReference>
<dbReference type="Pfam" id="PF00732">
    <property type="entry name" value="GMC_oxred_N"/>
    <property type="match status" value="1"/>
</dbReference>
<dbReference type="PIRSF" id="PIRSF000137">
    <property type="entry name" value="Alcohol_oxidase"/>
    <property type="match status" value="1"/>
</dbReference>
<dbReference type="SUPFAM" id="SSF54373">
    <property type="entry name" value="FAD-linked reductases, C-terminal domain"/>
    <property type="match status" value="1"/>
</dbReference>
<dbReference type="SUPFAM" id="SSF51905">
    <property type="entry name" value="FAD/NAD(P)-binding domain"/>
    <property type="match status" value="1"/>
</dbReference>
<dbReference type="PROSITE" id="PS00624">
    <property type="entry name" value="GMC_OXRED_2"/>
    <property type="match status" value="1"/>
</dbReference>